<gene>
    <name type="primary">GP41</name>
    <name type="ORF">ORF83</name>
</gene>
<protein>
    <recommendedName>
        <fullName>Structural glycoprotein gp41</fullName>
    </recommendedName>
</protein>
<keyword id="KW-0325">Glycoprotein</keyword>
<keyword id="KW-0426">Late protein</keyword>
<keyword id="KW-1185">Reference proteome</keyword>
<keyword id="KW-0946">Virion</keyword>
<comment type="subcellular location">
    <subcellularLocation>
        <location evidence="1">Virion</location>
    </subcellularLocation>
    <text evidence="1">Region spanning the nucleocapsid and envelope.</text>
</comment>
<comment type="developmental stage">
    <text>Associated with the polyhedron-derived virus (occluded virus).</text>
</comment>
<comment type="PTM">
    <text>O-glycosylated; contains N-acetylglucosamine side chains.</text>
</comment>
<comment type="similarity">
    <text evidence="3">Belongs to the baculoviridae gp41 family.</text>
</comment>
<sequence length="367" mass="40365">MNERDGFYLTPSQSGHPFAPTSATLTSSQSGYPTAVSTTLSRADSRSNTALAKAGDVGEAIWYNKCTDYVHKIIRYYRCNDMSELTPLMIQFINTIRDMCIDSNPVSANIIKRAQSDDDIVRHLIGLQKELRQNSVAEAIGSDFNIFQPSFVLNSLPAYAQKFYNGGANTLGKDALNEAAKQLSLAVQYMVSEAVTCSIPIPLPFDQQLANNYVTLLLKRATLPDNMQEAVKSRSFVHINMINDLINAVIEDLFAGGGTYYYYVLNEKNRARVVGLKENVGFLAPISASADIFNYIAQLATQQGKRPDMFENAAFLTAAAHAINSPAAHLTQSACQKSLSQLAAQCETLTRFVFMIMNHNTVPTTRG</sequence>
<proteinExistence type="evidence at transcript level"/>
<organismHost>
    <name type="scientific">Orgyia pseudotsugata</name>
    <name type="common">Douglas-fir tussock moth</name>
    <dbReference type="NCBI Taxonomy" id="33414"/>
</organismHost>
<name>VP41_NPVOP</name>
<feature type="chain" id="PRO_0000132904" description="Structural glycoprotein gp41">
    <location>
        <begin position="1"/>
        <end position="367"/>
    </location>
</feature>
<feature type="region of interest" description="Disordered" evidence="2">
    <location>
        <begin position="1"/>
        <end position="31"/>
    </location>
</feature>
<feature type="compositionally biased region" description="Polar residues" evidence="2">
    <location>
        <begin position="10"/>
        <end position="31"/>
    </location>
</feature>
<dbReference type="EMBL" id="U75930">
    <property type="protein sequence ID" value="AAC59082.1"/>
    <property type="molecule type" value="Genomic_DNA"/>
</dbReference>
<dbReference type="RefSeq" id="NP_046239.1">
    <property type="nucleotide sequence ID" value="NC_001875.2"/>
</dbReference>
<dbReference type="KEGG" id="vg:912044"/>
<dbReference type="OrthoDB" id="3665at10239"/>
<dbReference type="Proteomes" id="UP000009248">
    <property type="component" value="Genome"/>
</dbReference>
<dbReference type="GO" id="GO:0044423">
    <property type="term" value="C:virion component"/>
    <property type="evidence" value="ECO:0007669"/>
    <property type="project" value="UniProtKB-KW"/>
</dbReference>
<dbReference type="GO" id="GO:0005198">
    <property type="term" value="F:structural molecule activity"/>
    <property type="evidence" value="ECO:0007669"/>
    <property type="project" value="InterPro"/>
</dbReference>
<dbReference type="InterPro" id="IPR006790">
    <property type="entry name" value="Baculovirus_Gp41"/>
</dbReference>
<dbReference type="Pfam" id="PF04700">
    <property type="entry name" value="Baculo_gp41"/>
    <property type="match status" value="1"/>
</dbReference>
<evidence type="ECO:0000250" key="1"/>
<evidence type="ECO:0000256" key="2">
    <source>
        <dbReference type="SAM" id="MobiDB-lite"/>
    </source>
</evidence>
<evidence type="ECO:0000305" key="3"/>
<reference key="1">
    <citation type="journal article" date="1997" name="Virology">
        <title>The sequence of the Orgyia pseudotsugata multinucleocapsid nuclear polyhedrosis virus genome.</title>
        <authorList>
            <person name="Ahrens C.H."/>
            <person name="Russell R.R."/>
            <person name="Funk C.J."/>
            <person name="Evans J."/>
            <person name="Harwood S."/>
            <person name="Rohrmann G.F."/>
        </authorList>
    </citation>
    <scope>NUCLEOTIDE SEQUENCE [LARGE SCALE GENOMIC DNA]</scope>
</reference>
<accession>O10333</accession>
<organism>
    <name type="scientific">Orgyia pseudotsugata multicapsid polyhedrosis virus</name>
    <name type="common">OpMNPV</name>
    <dbReference type="NCBI Taxonomy" id="262177"/>
    <lineage>
        <taxon>Viruses</taxon>
        <taxon>Viruses incertae sedis</taxon>
        <taxon>Naldaviricetes</taxon>
        <taxon>Lefavirales</taxon>
        <taxon>Baculoviridae</taxon>
        <taxon>Alphabaculovirus</taxon>
        <taxon>Alphabaculovirus orpseudotsugatae</taxon>
    </lineage>
</organism>